<accession>Q2NVT9</accession>
<sequence>MTQYIVALTGGIGSGKSTVANTFAALGVPLVDADVIAREVVQPESAALRAIVQRFGPAMLSADGSLDRAALRARIFSDPAEKTWLNGLLHPLIQRQTEQQLRSARAPYVLWVVPMLIENNLQQRANRVLVVDVDRERQIARTISRDGVSREQVENILAAQVSRQRRLACADDIIDNSGRPEEITDRVATLHQRYLALAASATRQDKSS</sequence>
<comment type="function">
    <text evidence="1">Catalyzes the phosphorylation of the 3'-hydroxyl group of dephosphocoenzyme A to form coenzyme A.</text>
</comment>
<comment type="catalytic activity">
    <reaction evidence="1">
        <text>3'-dephospho-CoA + ATP = ADP + CoA + H(+)</text>
        <dbReference type="Rhea" id="RHEA:18245"/>
        <dbReference type="ChEBI" id="CHEBI:15378"/>
        <dbReference type="ChEBI" id="CHEBI:30616"/>
        <dbReference type="ChEBI" id="CHEBI:57287"/>
        <dbReference type="ChEBI" id="CHEBI:57328"/>
        <dbReference type="ChEBI" id="CHEBI:456216"/>
        <dbReference type="EC" id="2.7.1.24"/>
    </reaction>
</comment>
<comment type="pathway">
    <text evidence="1">Cofactor biosynthesis; coenzyme A biosynthesis; CoA from (R)-pantothenate: step 5/5.</text>
</comment>
<comment type="subcellular location">
    <subcellularLocation>
        <location evidence="1">Cytoplasm</location>
    </subcellularLocation>
</comment>
<comment type="similarity">
    <text evidence="1">Belongs to the CoaE family.</text>
</comment>
<protein>
    <recommendedName>
        <fullName evidence="1">Dephospho-CoA kinase</fullName>
        <ecNumber evidence="1">2.7.1.24</ecNumber>
    </recommendedName>
    <alternativeName>
        <fullName evidence="1">Dephosphocoenzyme A kinase</fullName>
    </alternativeName>
</protein>
<dbReference type="EC" id="2.7.1.24" evidence="1"/>
<dbReference type="EMBL" id="AP008232">
    <property type="protein sequence ID" value="BAE73736.1"/>
    <property type="molecule type" value="Genomic_DNA"/>
</dbReference>
<dbReference type="RefSeq" id="WP_011410434.1">
    <property type="nucleotide sequence ID" value="NC_007712.1"/>
</dbReference>
<dbReference type="SMR" id="Q2NVT9"/>
<dbReference type="STRING" id="343509.SG0461"/>
<dbReference type="KEGG" id="sgl:SG0461"/>
<dbReference type="eggNOG" id="COG0237">
    <property type="taxonomic scope" value="Bacteria"/>
</dbReference>
<dbReference type="HOGENOM" id="CLU_057180_1_2_6"/>
<dbReference type="OrthoDB" id="9812943at2"/>
<dbReference type="BioCyc" id="SGLO343509:SGP1_RS04075-MONOMER"/>
<dbReference type="UniPathway" id="UPA00241">
    <property type="reaction ID" value="UER00356"/>
</dbReference>
<dbReference type="Proteomes" id="UP000001932">
    <property type="component" value="Chromosome"/>
</dbReference>
<dbReference type="GO" id="GO:0005737">
    <property type="term" value="C:cytoplasm"/>
    <property type="evidence" value="ECO:0007669"/>
    <property type="project" value="UniProtKB-SubCell"/>
</dbReference>
<dbReference type="GO" id="GO:0005524">
    <property type="term" value="F:ATP binding"/>
    <property type="evidence" value="ECO:0007669"/>
    <property type="project" value="UniProtKB-UniRule"/>
</dbReference>
<dbReference type="GO" id="GO:0004140">
    <property type="term" value="F:dephospho-CoA kinase activity"/>
    <property type="evidence" value="ECO:0007669"/>
    <property type="project" value="UniProtKB-UniRule"/>
</dbReference>
<dbReference type="GO" id="GO:0015937">
    <property type="term" value="P:coenzyme A biosynthetic process"/>
    <property type="evidence" value="ECO:0007669"/>
    <property type="project" value="UniProtKB-UniRule"/>
</dbReference>
<dbReference type="CDD" id="cd02022">
    <property type="entry name" value="DPCK"/>
    <property type="match status" value="1"/>
</dbReference>
<dbReference type="FunFam" id="3.40.50.300:FF:000518">
    <property type="entry name" value="Dephospho-CoA kinase"/>
    <property type="match status" value="1"/>
</dbReference>
<dbReference type="Gene3D" id="3.40.50.300">
    <property type="entry name" value="P-loop containing nucleotide triphosphate hydrolases"/>
    <property type="match status" value="1"/>
</dbReference>
<dbReference type="HAMAP" id="MF_00376">
    <property type="entry name" value="Dephospho_CoA_kinase"/>
    <property type="match status" value="1"/>
</dbReference>
<dbReference type="InterPro" id="IPR001977">
    <property type="entry name" value="Depp_CoAkinase"/>
</dbReference>
<dbReference type="InterPro" id="IPR027417">
    <property type="entry name" value="P-loop_NTPase"/>
</dbReference>
<dbReference type="NCBIfam" id="TIGR00152">
    <property type="entry name" value="dephospho-CoA kinase"/>
    <property type="match status" value="1"/>
</dbReference>
<dbReference type="PANTHER" id="PTHR10695:SF46">
    <property type="entry name" value="BIFUNCTIONAL COENZYME A SYNTHASE-RELATED"/>
    <property type="match status" value="1"/>
</dbReference>
<dbReference type="PANTHER" id="PTHR10695">
    <property type="entry name" value="DEPHOSPHO-COA KINASE-RELATED"/>
    <property type="match status" value="1"/>
</dbReference>
<dbReference type="Pfam" id="PF01121">
    <property type="entry name" value="CoaE"/>
    <property type="match status" value="1"/>
</dbReference>
<dbReference type="SUPFAM" id="SSF52540">
    <property type="entry name" value="P-loop containing nucleoside triphosphate hydrolases"/>
    <property type="match status" value="1"/>
</dbReference>
<dbReference type="PROSITE" id="PS51219">
    <property type="entry name" value="DPCK"/>
    <property type="match status" value="1"/>
</dbReference>
<feature type="chain" id="PRO_0000243343" description="Dephospho-CoA kinase">
    <location>
        <begin position="1"/>
        <end position="208"/>
    </location>
</feature>
<feature type="domain" description="DPCK" evidence="1">
    <location>
        <begin position="5"/>
        <end position="201"/>
    </location>
</feature>
<feature type="binding site" evidence="1">
    <location>
        <begin position="13"/>
        <end position="18"/>
    </location>
    <ligand>
        <name>ATP</name>
        <dbReference type="ChEBI" id="CHEBI:30616"/>
    </ligand>
</feature>
<reference key="1">
    <citation type="journal article" date="2006" name="Genome Res.">
        <title>Massive genome erosion and functional adaptations provide insights into the symbiotic lifestyle of Sodalis glossinidius in the tsetse host.</title>
        <authorList>
            <person name="Toh H."/>
            <person name="Weiss B.L."/>
            <person name="Perkin S.A.H."/>
            <person name="Yamashita A."/>
            <person name="Oshima K."/>
            <person name="Hattori M."/>
            <person name="Aksoy S."/>
        </authorList>
    </citation>
    <scope>NUCLEOTIDE SEQUENCE [LARGE SCALE GENOMIC DNA]</scope>
    <source>
        <strain>morsitans</strain>
    </source>
</reference>
<evidence type="ECO:0000255" key="1">
    <source>
        <dbReference type="HAMAP-Rule" id="MF_00376"/>
    </source>
</evidence>
<proteinExistence type="inferred from homology"/>
<organism>
    <name type="scientific">Sodalis glossinidius (strain morsitans)</name>
    <dbReference type="NCBI Taxonomy" id="343509"/>
    <lineage>
        <taxon>Bacteria</taxon>
        <taxon>Pseudomonadati</taxon>
        <taxon>Pseudomonadota</taxon>
        <taxon>Gammaproteobacteria</taxon>
        <taxon>Enterobacterales</taxon>
        <taxon>Bruguierivoracaceae</taxon>
        <taxon>Sodalis</taxon>
    </lineage>
</organism>
<keyword id="KW-0067">ATP-binding</keyword>
<keyword id="KW-0173">Coenzyme A biosynthesis</keyword>
<keyword id="KW-0963">Cytoplasm</keyword>
<keyword id="KW-0418">Kinase</keyword>
<keyword id="KW-0547">Nucleotide-binding</keyword>
<keyword id="KW-0808">Transferase</keyword>
<name>COAE_SODGM</name>
<gene>
    <name evidence="1" type="primary">coaE</name>
    <name type="ordered locus">SG0461</name>
</gene>